<comment type="function">
    <text evidence="1">Catalyzes the formation of S-adenosylmethionine (AdoMet) from methionine and ATP. The overall synthetic reaction is composed of two sequential steps, AdoMet formation and the subsequent tripolyphosphate hydrolysis which occurs prior to release of AdoMet from the enzyme.</text>
</comment>
<comment type="catalytic activity">
    <reaction evidence="1">
        <text>L-methionine + ATP + H2O = S-adenosyl-L-methionine + phosphate + diphosphate</text>
        <dbReference type="Rhea" id="RHEA:21080"/>
        <dbReference type="ChEBI" id="CHEBI:15377"/>
        <dbReference type="ChEBI" id="CHEBI:30616"/>
        <dbReference type="ChEBI" id="CHEBI:33019"/>
        <dbReference type="ChEBI" id="CHEBI:43474"/>
        <dbReference type="ChEBI" id="CHEBI:57844"/>
        <dbReference type="ChEBI" id="CHEBI:59789"/>
        <dbReference type="EC" id="2.5.1.6"/>
    </reaction>
</comment>
<comment type="cofactor">
    <cofactor evidence="1">
        <name>Mg(2+)</name>
        <dbReference type="ChEBI" id="CHEBI:18420"/>
    </cofactor>
    <text evidence="1">Binds 2 divalent ions per subunit.</text>
</comment>
<comment type="cofactor">
    <cofactor evidence="1">
        <name>K(+)</name>
        <dbReference type="ChEBI" id="CHEBI:29103"/>
    </cofactor>
    <text evidence="1">Binds 1 potassium ion per subunit.</text>
</comment>
<comment type="pathway">
    <text evidence="1">Amino-acid biosynthesis; S-adenosyl-L-methionine biosynthesis; S-adenosyl-L-methionine from L-methionine: step 1/1.</text>
</comment>
<comment type="subunit">
    <text evidence="1">Homotetramer; dimer of dimers.</text>
</comment>
<comment type="subcellular location">
    <subcellularLocation>
        <location evidence="1">Cytoplasm</location>
    </subcellularLocation>
</comment>
<comment type="similarity">
    <text evidence="1">Belongs to the AdoMet synthase family.</text>
</comment>
<reference key="1">
    <citation type="journal article" date="2003" name="Nature">
        <title>The genome sequence of Bacillus anthracis Ames and comparison to closely related bacteria.</title>
        <authorList>
            <person name="Read T.D."/>
            <person name="Peterson S.N."/>
            <person name="Tourasse N.J."/>
            <person name="Baillie L.W."/>
            <person name="Paulsen I.T."/>
            <person name="Nelson K.E."/>
            <person name="Tettelin H."/>
            <person name="Fouts D.E."/>
            <person name="Eisen J.A."/>
            <person name="Gill S.R."/>
            <person name="Holtzapple E.K."/>
            <person name="Okstad O.A."/>
            <person name="Helgason E."/>
            <person name="Rilstone J."/>
            <person name="Wu M."/>
            <person name="Kolonay J.F."/>
            <person name="Beanan M.J."/>
            <person name="Dodson R.J."/>
            <person name="Brinkac L.M."/>
            <person name="Gwinn M.L."/>
            <person name="DeBoy R.T."/>
            <person name="Madpu R."/>
            <person name="Daugherty S.C."/>
            <person name="Durkin A.S."/>
            <person name="Haft D.H."/>
            <person name="Nelson W.C."/>
            <person name="Peterson J.D."/>
            <person name="Pop M."/>
            <person name="Khouri H.M."/>
            <person name="Radune D."/>
            <person name="Benton J.L."/>
            <person name="Mahamoud Y."/>
            <person name="Jiang L."/>
            <person name="Hance I.R."/>
            <person name="Weidman J.F."/>
            <person name="Berry K.J."/>
            <person name="Plaut R.D."/>
            <person name="Wolf A.M."/>
            <person name="Watkins K.L."/>
            <person name="Nierman W.C."/>
            <person name="Hazen A."/>
            <person name="Cline R.T."/>
            <person name="Redmond C."/>
            <person name="Thwaite J.E."/>
            <person name="White O."/>
            <person name="Salzberg S.L."/>
            <person name="Thomason B."/>
            <person name="Friedlander A.M."/>
            <person name="Koehler T.M."/>
            <person name="Hanna P.C."/>
            <person name="Kolstoe A.-B."/>
            <person name="Fraser C.M."/>
        </authorList>
    </citation>
    <scope>NUCLEOTIDE SEQUENCE [LARGE SCALE GENOMIC DNA]</scope>
    <source>
        <strain>Ames / isolate Porton</strain>
    </source>
</reference>
<reference key="2">
    <citation type="journal article" date="2009" name="J. Bacteriol.">
        <title>The complete genome sequence of Bacillus anthracis Ames 'Ancestor'.</title>
        <authorList>
            <person name="Ravel J."/>
            <person name="Jiang L."/>
            <person name="Stanley S.T."/>
            <person name="Wilson M.R."/>
            <person name="Decker R.S."/>
            <person name="Read T.D."/>
            <person name="Worsham P."/>
            <person name="Keim P.S."/>
            <person name="Salzberg S.L."/>
            <person name="Fraser-Liggett C.M."/>
            <person name="Rasko D.A."/>
        </authorList>
    </citation>
    <scope>NUCLEOTIDE SEQUENCE [LARGE SCALE GENOMIC DNA]</scope>
    <source>
        <strain>Ames ancestor</strain>
    </source>
</reference>
<reference key="3">
    <citation type="submission" date="2004-01" db="EMBL/GenBank/DDBJ databases">
        <title>Complete genome sequence of Bacillus anthracis Sterne.</title>
        <authorList>
            <person name="Brettin T.S."/>
            <person name="Bruce D."/>
            <person name="Challacombe J.F."/>
            <person name="Gilna P."/>
            <person name="Han C."/>
            <person name="Hill K."/>
            <person name="Hitchcock P."/>
            <person name="Jackson P."/>
            <person name="Keim P."/>
            <person name="Longmire J."/>
            <person name="Lucas S."/>
            <person name="Okinaka R."/>
            <person name="Richardson P."/>
            <person name="Rubin E."/>
            <person name="Tice H."/>
        </authorList>
    </citation>
    <scope>NUCLEOTIDE SEQUENCE [LARGE SCALE GENOMIC DNA]</scope>
    <source>
        <strain>Sterne</strain>
    </source>
</reference>
<evidence type="ECO:0000255" key="1">
    <source>
        <dbReference type="HAMAP-Rule" id="MF_00086"/>
    </source>
</evidence>
<proteinExistence type="inferred from homology"/>
<feature type="chain" id="PRO_0000174483" description="S-adenosylmethionine synthase">
    <location>
        <begin position="1"/>
        <end position="399"/>
    </location>
</feature>
<feature type="region of interest" description="Flexible loop" evidence="1">
    <location>
        <begin position="101"/>
        <end position="111"/>
    </location>
</feature>
<feature type="binding site" description="in other chain" evidence="1">
    <location>
        <position position="17"/>
    </location>
    <ligand>
        <name>ATP</name>
        <dbReference type="ChEBI" id="CHEBI:30616"/>
        <note>ligand shared between two neighboring subunits</note>
    </ligand>
</feature>
<feature type="binding site" evidence="1">
    <location>
        <position position="19"/>
    </location>
    <ligand>
        <name>Mg(2+)</name>
        <dbReference type="ChEBI" id="CHEBI:18420"/>
    </ligand>
</feature>
<feature type="binding site" evidence="1">
    <location>
        <position position="45"/>
    </location>
    <ligand>
        <name>K(+)</name>
        <dbReference type="ChEBI" id="CHEBI:29103"/>
    </ligand>
</feature>
<feature type="binding site" description="in other chain" evidence="1">
    <location>
        <position position="58"/>
    </location>
    <ligand>
        <name>L-methionine</name>
        <dbReference type="ChEBI" id="CHEBI:57844"/>
        <note>ligand shared between two neighboring subunits</note>
    </ligand>
</feature>
<feature type="binding site" description="in other chain" evidence="1">
    <location>
        <position position="101"/>
    </location>
    <ligand>
        <name>L-methionine</name>
        <dbReference type="ChEBI" id="CHEBI:57844"/>
        <note>ligand shared between two neighboring subunits</note>
    </ligand>
</feature>
<feature type="binding site" description="in other chain" evidence="1">
    <location>
        <begin position="177"/>
        <end position="179"/>
    </location>
    <ligand>
        <name>ATP</name>
        <dbReference type="ChEBI" id="CHEBI:30616"/>
        <note>ligand shared between two neighboring subunits</note>
    </ligand>
</feature>
<feature type="binding site" description="in other chain" evidence="1">
    <location>
        <begin position="244"/>
        <end position="245"/>
    </location>
    <ligand>
        <name>ATP</name>
        <dbReference type="ChEBI" id="CHEBI:30616"/>
        <note>ligand shared between two neighboring subunits</note>
    </ligand>
</feature>
<feature type="binding site" evidence="1">
    <location>
        <position position="253"/>
    </location>
    <ligand>
        <name>ATP</name>
        <dbReference type="ChEBI" id="CHEBI:30616"/>
        <note>ligand shared between two neighboring subunits</note>
    </ligand>
</feature>
<feature type="binding site" evidence="1">
    <location>
        <position position="253"/>
    </location>
    <ligand>
        <name>L-methionine</name>
        <dbReference type="ChEBI" id="CHEBI:57844"/>
        <note>ligand shared between two neighboring subunits</note>
    </ligand>
</feature>
<feature type="binding site" description="in other chain" evidence="1">
    <location>
        <begin position="259"/>
        <end position="260"/>
    </location>
    <ligand>
        <name>ATP</name>
        <dbReference type="ChEBI" id="CHEBI:30616"/>
        <note>ligand shared between two neighboring subunits</note>
    </ligand>
</feature>
<feature type="binding site" evidence="1">
    <location>
        <position position="276"/>
    </location>
    <ligand>
        <name>ATP</name>
        <dbReference type="ChEBI" id="CHEBI:30616"/>
        <note>ligand shared between two neighboring subunits</note>
    </ligand>
</feature>
<feature type="binding site" evidence="1">
    <location>
        <position position="280"/>
    </location>
    <ligand>
        <name>ATP</name>
        <dbReference type="ChEBI" id="CHEBI:30616"/>
        <note>ligand shared between two neighboring subunits</note>
    </ligand>
</feature>
<feature type="binding site" description="in other chain" evidence="1">
    <location>
        <position position="284"/>
    </location>
    <ligand>
        <name>L-methionine</name>
        <dbReference type="ChEBI" id="CHEBI:57844"/>
        <note>ligand shared between two neighboring subunits</note>
    </ligand>
</feature>
<keyword id="KW-0067">ATP-binding</keyword>
<keyword id="KW-0963">Cytoplasm</keyword>
<keyword id="KW-0460">Magnesium</keyword>
<keyword id="KW-0479">Metal-binding</keyword>
<keyword id="KW-0547">Nucleotide-binding</keyword>
<keyword id="KW-0554">One-carbon metabolism</keyword>
<keyword id="KW-0630">Potassium</keyword>
<keyword id="KW-1185">Reference proteome</keyword>
<keyword id="KW-0808">Transferase</keyword>
<gene>
    <name evidence="1" type="primary">metK</name>
    <name type="ordered locus">BA_5017</name>
    <name type="ordered locus">GBAA_5017</name>
    <name type="ordered locus">BAS4660</name>
</gene>
<organism>
    <name type="scientific">Bacillus anthracis</name>
    <dbReference type="NCBI Taxonomy" id="1392"/>
    <lineage>
        <taxon>Bacteria</taxon>
        <taxon>Bacillati</taxon>
        <taxon>Bacillota</taxon>
        <taxon>Bacilli</taxon>
        <taxon>Bacillales</taxon>
        <taxon>Bacillaceae</taxon>
        <taxon>Bacillus</taxon>
        <taxon>Bacillus cereus group</taxon>
    </lineage>
</organism>
<accession>Q81KI0</accession>
<accession>Q6HRY4</accession>
<accession>Q6KL87</accession>
<name>METK_BACAN</name>
<dbReference type="EC" id="2.5.1.6" evidence="1"/>
<dbReference type="EMBL" id="AE016879">
    <property type="protein sequence ID" value="AAP28697.1"/>
    <property type="molecule type" value="Genomic_DNA"/>
</dbReference>
<dbReference type="EMBL" id="AE017334">
    <property type="protein sequence ID" value="AAT34144.1"/>
    <property type="molecule type" value="Genomic_DNA"/>
</dbReference>
<dbReference type="EMBL" id="AE017225">
    <property type="protein sequence ID" value="AAT56954.1"/>
    <property type="molecule type" value="Genomic_DNA"/>
</dbReference>
<dbReference type="RefSeq" id="NP_847211.1">
    <property type="nucleotide sequence ID" value="NC_003997.3"/>
</dbReference>
<dbReference type="RefSeq" id="WP_000163125.1">
    <property type="nucleotide sequence ID" value="NZ_WXXJ01000026.1"/>
</dbReference>
<dbReference type="RefSeq" id="YP_030904.1">
    <property type="nucleotide sequence ID" value="NC_005945.1"/>
</dbReference>
<dbReference type="SMR" id="Q81KI0"/>
<dbReference type="STRING" id="261594.GBAA_5017"/>
<dbReference type="DNASU" id="1084276"/>
<dbReference type="GeneID" id="75087933"/>
<dbReference type="KEGG" id="ban:BA_5017"/>
<dbReference type="KEGG" id="bar:GBAA_5017"/>
<dbReference type="KEGG" id="bat:BAS4660"/>
<dbReference type="PATRIC" id="fig|198094.11.peg.4979"/>
<dbReference type="eggNOG" id="COG0192">
    <property type="taxonomic scope" value="Bacteria"/>
</dbReference>
<dbReference type="HOGENOM" id="CLU_041802_1_1_9"/>
<dbReference type="OMA" id="ASYMARY"/>
<dbReference type="OrthoDB" id="9801686at2"/>
<dbReference type="UniPathway" id="UPA00315">
    <property type="reaction ID" value="UER00080"/>
</dbReference>
<dbReference type="Proteomes" id="UP000000427">
    <property type="component" value="Chromosome"/>
</dbReference>
<dbReference type="Proteomes" id="UP000000594">
    <property type="component" value="Chromosome"/>
</dbReference>
<dbReference type="GO" id="GO:0005737">
    <property type="term" value="C:cytoplasm"/>
    <property type="evidence" value="ECO:0007669"/>
    <property type="project" value="UniProtKB-SubCell"/>
</dbReference>
<dbReference type="GO" id="GO:0005524">
    <property type="term" value="F:ATP binding"/>
    <property type="evidence" value="ECO:0007669"/>
    <property type="project" value="UniProtKB-UniRule"/>
</dbReference>
<dbReference type="GO" id="GO:0000287">
    <property type="term" value="F:magnesium ion binding"/>
    <property type="evidence" value="ECO:0007669"/>
    <property type="project" value="UniProtKB-UniRule"/>
</dbReference>
<dbReference type="GO" id="GO:0004478">
    <property type="term" value="F:methionine adenosyltransferase activity"/>
    <property type="evidence" value="ECO:0007669"/>
    <property type="project" value="UniProtKB-UniRule"/>
</dbReference>
<dbReference type="GO" id="GO:0006730">
    <property type="term" value="P:one-carbon metabolic process"/>
    <property type="evidence" value="ECO:0007669"/>
    <property type="project" value="UniProtKB-KW"/>
</dbReference>
<dbReference type="GO" id="GO:0006556">
    <property type="term" value="P:S-adenosylmethionine biosynthetic process"/>
    <property type="evidence" value="ECO:0007669"/>
    <property type="project" value="UniProtKB-UniRule"/>
</dbReference>
<dbReference type="CDD" id="cd18079">
    <property type="entry name" value="S-AdoMet_synt"/>
    <property type="match status" value="1"/>
</dbReference>
<dbReference type="FunFam" id="3.30.300.10:FF:000003">
    <property type="entry name" value="S-adenosylmethionine synthase"/>
    <property type="match status" value="1"/>
</dbReference>
<dbReference type="FunFam" id="3.30.300.10:FF:000004">
    <property type="entry name" value="S-adenosylmethionine synthase"/>
    <property type="match status" value="1"/>
</dbReference>
<dbReference type="Gene3D" id="3.30.300.10">
    <property type="match status" value="3"/>
</dbReference>
<dbReference type="HAMAP" id="MF_00086">
    <property type="entry name" value="S_AdoMet_synth1"/>
    <property type="match status" value="1"/>
</dbReference>
<dbReference type="InterPro" id="IPR022631">
    <property type="entry name" value="ADOMET_SYNTHASE_CS"/>
</dbReference>
<dbReference type="InterPro" id="IPR022630">
    <property type="entry name" value="S-AdoMet_synt_C"/>
</dbReference>
<dbReference type="InterPro" id="IPR022629">
    <property type="entry name" value="S-AdoMet_synt_central"/>
</dbReference>
<dbReference type="InterPro" id="IPR022628">
    <property type="entry name" value="S-AdoMet_synt_N"/>
</dbReference>
<dbReference type="InterPro" id="IPR002133">
    <property type="entry name" value="S-AdoMet_synthetase"/>
</dbReference>
<dbReference type="InterPro" id="IPR022636">
    <property type="entry name" value="S-AdoMet_synthetase_sfam"/>
</dbReference>
<dbReference type="NCBIfam" id="TIGR01034">
    <property type="entry name" value="metK"/>
    <property type="match status" value="1"/>
</dbReference>
<dbReference type="PANTHER" id="PTHR11964">
    <property type="entry name" value="S-ADENOSYLMETHIONINE SYNTHETASE"/>
    <property type="match status" value="1"/>
</dbReference>
<dbReference type="Pfam" id="PF02773">
    <property type="entry name" value="S-AdoMet_synt_C"/>
    <property type="match status" value="1"/>
</dbReference>
<dbReference type="Pfam" id="PF02772">
    <property type="entry name" value="S-AdoMet_synt_M"/>
    <property type="match status" value="1"/>
</dbReference>
<dbReference type="Pfam" id="PF00438">
    <property type="entry name" value="S-AdoMet_synt_N"/>
    <property type="match status" value="1"/>
</dbReference>
<dbReference type="PIRSF" id="PIRSF000497">
    <property type="entry name" value="MAT"/>
    <property type="match status" value="1"/>
</dbReference>
<dbReference type="SUPFAM" id="SSF55973">
    <property type="entry name" value="S-adenosylmethionine synthetase"/>
    <property type="match status" value="3"/>
</dbReference>
<dbReference type="PROSITE" id="PS00376">
    <property type="entry name" value="ADOMET_SYNTHASE_1"/>
    <property type="match status" value="1"/>
</dbReference>
<dbReference type="PROSITE" id="PS00377">
    <property type="entry name" value="ADOMET_SYNTHASE_2"/>
    <property type="match status" value="1"/>
</dbReference>
<sequence>MTKKRHLFTSESVTEGHPDKICDQISDSILDAILSKDANARVACETTVTTGLVLVAGEITTSTYVDIPKIVRETIQGIGYTRAKYGFDAETCAVLTSIDEQSADIAMGVDQALEAREGQMTDAEIEAIGAGDQGLMFGFACNETQELMPLPISLAHKLARRLTEVRKNDTLSYLRPDGKTQVTVEYDENGKPVRVDTIVISTQHHPDVTWEEIDRDLKEHVIKAVVPAELIDGETKFFINPTGRFVIGGPQGDAGLTGRKIIVDTYGGYARHGGGAFSGKDATKVDRSAAYAARYVAKNIVAAGLAEKAEVQLAYAIGVAQPVSISVDTFGTGKVSEDVLVELVRNNFDLRPAGIIKMLDLRRPIYKQTAAYGHFGRTDVDLSWERTDKAAALKEQAGL</sequence>
<protein>
    <recommendedName>
        <fullName evidence="1">S-adenosylmethionine synthase</fullName>
        <shortName evidence="1">AdoMet synthase</shortName>
        <ecNumber evidence="1">2.5.1.6</ecNumber>
    </recommendedName>
    <alternativeName>
        <fullName evidence="1">MAT</fullName>
    </alternativeName>
    <alternativeName>
        <fullName evidence="1">Methionine adenosyltransferase</fullName>
    </alternativeName>
</protein>